<feature type="chain" id="PRO_1000085037" description="Holin-like protein CidA">
    <location>
        <begin position="1"/>
        <end position="131"/>
    </location>
</feature>
<feature type="transmembrane region" description="Helical" evidence="1">
    <location>
        <begin position="4"/>
        <end position="24"/>
    </location>
</feature>
<feature type="transmembrane region" description="Helical" evidence="1">
    <location>
        <begin position="30"/>
        <end position="50"/>
    </location>
</feature>
<feature type="transmembrane region" description="Helical" evidence="1">
    <location>
        <begin position="65"/>
        <end position="85"/>
    </location>
</feature>
<feature type="transmembrane region" description="Helical" evidence="1">
    <location>
        <begin position="88"/>
        <end position="108"/>
    </location>
</feature>
<comment type="function">
    <text evidence="1">Increases the activity of extracellular murein hydrolases possibly by mediating their export via hole formation. Inhibited by the antiholin-like proteins LrgAB. In an unstressed cell, the LrgAB products probably inhibit the function of the CidAB proteins. When a cell is stressed by the addition of antibiotics or by other factors in the environment, the CidAB proteins possibly oligomerize within the bacterial cell membrane, creating lesions that disrupt the proton motive force, which in turn results in loss of cell viability. These lesions are also hypothesized to regulate the subsequent cell lysis by either allowing the murein hydrolases access to the cell wall substrate and/or regulating their activity by a possible change in the cell wall pH that results from loss of membrane potential.</text>
</comment>
<comment type="subcellular location">
    <subcellularLocation>
        <location evidence="1">Cell membrane</location>
        <topology evidence="1">Multi-pass membrane protein</topology>
    </subcellularLocation>
</comment>
<comment type="similarity">
    <text evidence="1">Belongs to the CidA/LrgA family. CidA subfamily.</text>
</comment>
<protein>
    <recommendedName>
        <fullName evidence="1">Holin-like protein CidA</fullName>
    </recommendedName>
</protein>
<reference key="1">
    <citation type="submission" date="2007-06" db="EMBL/GenBank/DDBJ databases">
        <title>Complete sequence of chromosome of Staphylococcus aureus subsp. aureus JH1.</title>
        <authorList>
            <consortium name="US DOE Joint Genome Institute"/>
            <person name="Copeland A."/>
            <person name="Lucas S."/>
            <person name="Lapidus A."/>
            <person name="Barry K."/>
            <person name="Detter J.C."/>
            <person name="Glavina del Rio T."/>
            <person name="Hammon N."/>
            <person name="Israni S."/>
            <person name="Dalin E."/>
            <person name="Tice H."/>
            <person name="Pitluck S."/>
            <person name="Chain P."/>
            <person name="Malfatti S."/>
            <person name="Shin M."/>
            <person name="Vergez L."/>
            <person name="Schmutz J."/>
            <person name="Larimer F."/>
            <person name="Land M."/>
            <person name="Hauser L."/>
            <person name="Kyrpides N."/>
            <person name="Ivanova N."/>
            <person name="Tomasz A."/>
            <person name="Richardson P."/>
        </authorList>
    </citation>
    <scope>NUCLEOTIDE SEQUENCE [LARGE SCALE GENOMIC DNA]</scope>
    <source>
        <strain>JH1</strain>
    </source>
</reference>
<dbReference type="EMBL" id="CP000736">
    <property type="protein sequence ID" value="ABR53440.1"/>
    <property type="molecule type" value="Genomic_DNA"/>
</dbReference>
<dbReference type="SMR" id="A6U4S2"/>
<dbReference type="KEGG" id="sah:SaurJH1_2617"/>
<dbReference type="HOGENOM" id="CLU_113736_2_1_9"/>
<dbReference type="GO" id="GO:0005886">
    <property type="term" value="C:plasma membrane"/>
    <property type="evidence" value="ECO:0007669"/>
    <property type="project" value="UniProtKB-SubCell"/>
</dbReference>
<dbReference type="GO" id="GO:0019835">
    <property type="term" value="P:cytolysis"/>
    <property type="evidence" value="ECO:0007669"/>
    <property type="project" value="UniProtKB-UniRule"/>
</dbReference>
<dbReference type="GO" id="GO:0031640">
    <property type="term" value="P:killing of cells of another organism"/>
    <property type="evidence" value="ECO:0007669"/>
    <property type="project" value="UniProtKB-KW"/>
</dbReference>
<dbReference type="GO" id="GO:0012501">
    <property type="term" value="P:programmed cell death"/>
    <property type="evidence" value="ECO:0007669"/>
    <property type="project" value="UniProtKB-UniRule"/>
</dbReference>
<dbReference type="HAMAP" id="MF_01143">
    <property type="entry name" value="CidA"/>
    <property type="match status" value="1"/>
</dbReference>
<dbReference type="InterPro" id="IPR023760">
    <property type="entry name" value="Holin-like_CidA"/>
</dbReference>
<dbReference type="InterPro" id="IPR005538">
    <property type="entry name" value="LrgA/CidA"/>
</dbReference>
<dbReference type="PANTHER" id="PTHR33931:SF2">
    <property type="entry name" value="HOLIN-LIKE PROTEIN CIDA"/>
    <property type="match status" value="1"/>
</dbReference>
<dbReference type="PANTHER" id="PTHR33931">
    <property type="entry name" value="HOLIN-LIKE PROTEIN CIDA-RELATED"/>
    <property type="match status" value="1"/>
</dbReference>
<dbReference type="Pfam" id="PF03788">
    <property type="entry name" value="LrgA"/>
    <property type="match status" value="1"/>
</dbReference>
<accession>A6U4S2</accession>
<name>CIDA_STAA2</name>
<sequence length="131" mass="14730">MHKVQLIIKLLLQLGIIIVITYIGTEIQKIFHLPLAGSIVGLFLFYLLLQFKIVPLTWVEDGANFLLKTMVFFFIPSVVGIMDVASEITLNYILFFAVIIIGTCIVALSSGYIAEKMSVKHKHRKGVDAYE</sequence>
<keyword id="KW-1003">Cell membrane</keyword>
<keyword id="KW-0204">Cytolysis</keyword>
<keyword id="KW-0472">Membrane</keyword>
<keyword id="KW-0812">Transmembrane</keyword>
<keyword id="KW-1133">Transmembrane helix</keyword>
<proteinExistence type="inferred from homology"/>
<gene>
    <name evidence="1" type="primary">cidA</name>
    <name type="ordered locus">SaurJH1_2617</name>
</gene>
<evidence type="ECO:0000255" key="1">
    <source>
        <dbReference type="HAMAP-Rule" id="MF_01143"/>
    </source>
</evidence>
<organism>
    <name type="scientific">Staphylococcus aureus (strain JH1)</name>
    <dbReference type="NCBI Taxonomy" id="359787"/>
    <lineage>
        <taxon>Bacteria</taxon>
        <taxon>Bacillati</taxon>
        <taxon>Bacillota</taxon>
        <taxon>Bacilli</taxon>
        <taxon>Bacillales</taxon>
        <taxon>Staphylococcaceae</taxon>
        <taxon>Staphylococcus</taxon>
    </lineage>
</organism>